<comment type="function">
    <text evidence="1">Participates actively in the response to hyperosmotic and heat shock by preventing the aggregation of stress-denatured proteins and by disaggregating proteins, also in an autonomous, DnaK-independent fashion. Unfolded proteins bind initially to DnaJ; upon interaction with the DnaJ-bound protein, DnaK hydrolyzes its bound ATP, resulting in the formation of a stable complex. GrpE releases ADP from DnaK; ATP binding to DnaK triggers the release of the substrate protein, thus completing the reaction cycle. Several rounds of ATP-dependent interactions between DnaJ, DnaK and GrpE are required for fully efficient folding. Also involved, together with DnaK and GrpE, in the DNA replication of plasmids through activation of initiation proteins.</text>
</comment>
<comment type="cofactor">
    <cofactor evidence="1">
        <name>Zn(2+)</name>
        <dbReference type="ChEBI" id="CHEBI:29105"/>
    </cofactor>
    <text evidence="1">Binds 2 Zn(2+) ions per monomer.</text>
</comment>
<comment type="subunit">
    <text evidence="1">Homodimer.</text>
</comment>
<comment type="subcellular location">
    <subcellularLocation>
        <location evidence="1">Cytoplasm</location>
    </subcellularLocation>
</comment>
<comment type="domain">
    <text evidence="1">The J domain is necessary and sufficient to stimulate DnaK ATPase activity. Zinc center 1 plays an important role in the autonomous, DnaK-independent chaperone activity of DnaJ. Zinc center 2 is essential for interaction with DnaK and for DnaJ activity.</text>
</comment>
<comment type="similarity">
    <text evidence="1">Belongs to the DnaJ family.</text>
</comment>
<name>DNAJ_YERPA</name>
<gene>
    <name evidence="1" type="primary">dnaJ</name>
    <name type="ordered locus">YPA_4063</name>
</gene>
<feature type="chain" id="PRO_1000085334" description="Chaperone protein DnaJ">
    <location>
        <begin position="1"/>
        <end position="379"/>
    </location>
</feature>
<feature type="domain" description="J" evidence="1">
    <location>
        <begin position="5"/>
        <end position="70"/>
    </location>
</feature>
<feature type="repeat" description="CXXCXGXG motif">
    <location>
        <begin position="147"/>
        <end position="154"/>
    </location>
</feature>
<feature type="repeat" description="CXXCXGXG motif">
    <location>
        <begin position="164"/>
        <end position="171"/>
    </location>
</feature>
<feature type="repeat" description="CXXCXGXG motif">
    <location>
        <begin position="186"/>
        <end position="193"/>
    </location>
</feature>
<feature type="repeat" description="CXXCXGXG motif">
    <location>
        <begin position="200"/>
        <end position="207"/>
    </location>
</feature>
<feature type="zinc finger region" description="CR-type" evidence="1">
    <location>
        <begin position="134"/>
        <end position="212"/>
    </location>
</feature>
<feature type="binding site" evidence="1">
    <location>
        <position position="147"/>
    </location>
    <ligand>
        <name>Zn(2+)</name>
        <dbReference type="ChEBI" id="CHEBI:29105"/>
        <label>1</label>
    </ligand>
</feature>
<feature type="binding site" evidence="1">
    <location>
        <position position="150"/>
    </location>
    <ligand>
        <name>Zn(2+)</name>
        <dbReference type="ChEBI" id="CHEBI:29105"/>
        <label>1</label>
    </ligand>
</feature>
<feature type="binding site" evidence="1">
    <location>
        <position position="164"/>
    </location>
    <ligand>
        <name>Zn(2+)</name>
        <dbReference type="ChEBI" id="CHEBI:29105"/>
        <label>2</label>
    </ligand>
</feature>
<feature type="binding site" evidence="1">
    <location>
        <position position="167"/>
    </location>
    <ligand>
        <name>Zn(2+)</name>
        <dbReference type="ChEBI" id="CHEBI:29105"/>
        <label>2</label>
    </ligand>
</feature>
<feature type="binding site" evidence="1">
    <location>
        <position position="186"/>
    </location>
    <ligand>
        <name>Zn(2+)</name>
        <dbReference type="ChEBI" id="CHEBI:29105"/>
        <label>2</label>
    </ligand>
</feature>
<feature type="binding site" evidence="1">
    <location>
        <position position="189"/>
    </location>
    <ligand>
        <name>Zn(2+)</name>
        <dbReference type="ChEBI" id="CHEBI:29105"/>
        <label>2</label>
    </ligand>
</feature>
<feature type="binding site" evidence="1">
    <location>
        <position position="200"/>
    </location>
    <ligand>
        <name>Zn(2+)</name>
        <dbReference type="ChEBI" id="CHEBI:29105"/>
        <label>1</label>
    </ligand>
</feature>
<feature type="binding site" evidence="1">
    <location>
        <position position="203"/>
    </location>
    <ligand>
        <name>Zn(2+)</name>
        <dbReference type="ChEBI" id="CHEBI:29105"/>
        <label>1</label>
    </ligand>
</feature>
<keyword id="KW-0143">Chaperone</keyword>
<keyword id="KW-0963">Cytoplasm</keyword>
<keyword id="KW-0235">DNA replication</keyword>
<keyword id="KW-0479">Metal-binding</keyword>
<keyword id="KW-0677">Repeat</keyword>
<keyword id="KW-0346">Stress response</keyword>
<keyword id="KW-0862">Zinc</keyword>
<keyword id="KW-0863">Zinc-finger</keyword>
<reference key="1">
    <citation type="journal article" date="2006" name="J. Bacteriol.">
        <title>Complete genome sequence of Yersinia pestis strains Antiqua and Nepal516: evidence of gene reduction in an emerging pathogen.</title>
        <authorList>
            <person name="Chain P.S.G."/>
            <person name="Hu P."/>
            <person name="Malfatti S.A."/>
            <person name="Radnedge L."/>
            <person name="Larimer F."/>
            <person name="Vergez L.M."/>
            <person name="Worsham P."/>
            <person name="Chu M.C."/>
            <person name="Andersen G.L."/>
        </authorList>
    </citation>
    <scope>NUCLEOTIDE SEQUENCE [LARGE SCALE GENOMIC DNA]</scope>
    <source>
        <strain>Antiqua</strain>
    </source>
</reference>
<evidence type="ECO:0000255" key="1">
    <source>
        <dbReference type="HAMAP-Rule" id="MF_01152"/>
    </source>
</evidence>
<protein>
    <recommendedName>
        <fullName evidence="1">Chaperone protein DnaJ</fullName>
    </recommendedName>
</protein>
<organism>
    <name type="scientific">Yersinia pestis bv. Antiqua (strain Antiqua)</name>
    <dbReference type="NCBI Taxonomy" id="360102"/>
    <lineage>
        <taxon>Bacteria</taxon>
        <taxon>Pseudomonadati</taxon>
        <taxon>Pseudomonadota</taxon>
        <taxon>Gammaproteobacteria</taxon>
        <taxon>Enterobacterales</taxon>
        <taxon>Yersiniaceae</taxon>
        <taxon>Yersinia</taxon>
    </lineage>
</organism>
<accession>Q1C0J8</accession>
<proteinExistence type="inferred from homology"/>
<sequence>MAKRDYYEVLGVSRDAEEREIKKAYKRLAMKFHPDRQSEDKNAEEKFKEAKEAYEILTDAQKRAAYDQYGHAAFEQGGMGGGGFGGGGGGADFSDIFGDVFGDIFGGGRRQQRASRGSDLRYNMDLTLEEAVRGVTKEIRIPTLDECDVCHGSGAKPGSSPVTCPTCHGAGQVQMRQGFFTVQQACPHCHGRGQIIKDPCNKCHGHGRVEKSKTLSVKIPAGVDTGDRIRLSGEGEAGEHGAPSGDLYVQVQVKAHPIFEREGNNLYCEVPINFAMAALGGEIEVPTLDGRVKLKIPAETQTGKMFRMRGKGVKSVRGGSQGDLLCRVVVETPVSLSEKQKQLLRELEESFVGAAGEKNSPRAKSFLDGVKKFFDDLTR</sequence>
<dbReference type="EMBL" id="CP000308">
    <property type="protein sequence ID" value="ABG16024.1"/>
    <property type="molecule type" value="Genomic_DNA"/>
</dbReference>
<dbReference type="RefSeq" id="WP_002209249.1">
    <property type="nucleotide sequence ID" value="NZ_CP009906.1"/>
</dbReference>
<dbReference type="SMR" id="Q1C0J8"/>
<dbReference type="GeneID" id="57974140"/>
<dbReference type="KEGG" id="ypa:YPA_4063"/>
<dbReference type="Proteomes" id="UP000001971">
    <property type="component" value="Chromosome"/>
</dbReference>
<dbReference type="GO" id="GO:0005737">
    <property type="term" value="C:cytoplasm"/>
    <property type="evidence" value="ECO:0007669"/>
    <property type="project" value="UniProtKB-SubCell"/>
</dbReference>
<dbReference type="GO" id="GO:0005524">
    <property type="term" value="F:ATP binding"/>
    <property type="evidence" value="ECO:0007669"/>
    <property type="project" value="InterPro"/>
</dbReference>
<dbReference type="GO" id="GO:0031072">
    <property type="term" value="F:heat shock protein binding"/>
    <property type="evidence" value="ECO:0007669"/>
    <property type="project" value="InterPro"/>
</dbReference>
<dbReference type="GO" id="GO:0051082">
    <property type="term" value="F:unfolded protein binding"/>
    <property type="evidence" value="ECO:0007669"/>
    <property type="project" value="UniProtKB-UniRule"/>
</dbReference>
<dbReference type="GO" id="GO:0008270">
    <property type="term" value="F:zinc ion binding"/>
    <property type="evidence" value="ECO:0007669"/>
    <property type="project" value="UniProtKB-UniRule"/>
</dbReference>
<dbReference type="GO" id="GO:0051085">
    <property type="term" value="P:chaperone cofactor-dependent protein refolding"/>
    <property type="evidence" value="ECO:0007669"/>
    <property type="project" value="TreeGrafter"/>
</dbReference>
<dbReference type="GO" id="GO:0006260">
    <property type="term" value="P:DNA replication"/>
    <property type="evidence" value="ECO:0007669"/>
    <property type="project" value="UniProtKB-KW"/>
</dbReference>
<dbReference type="GO" id="GO:0042026">
    <property type="term" value="P:protein refolding"/>
    <property type="evidence" value="ECO:0007669"/>
    <property type="project" value="TreeGrafter"/>
</dbReference>
<dbReference type="GO" id="GO:0009408">
    <property type="term" value="P:response to heat"/>
    <property type="evidence" value="ECO:0007669"/>
    <property type="project" value="InterPro"/>
</dbReference>
<dbReference type="CDD" id="cd06257">
    <property type="entry name" value="DnaJ"/>
    <property type="match status" value="1"/>
</dbReference>
<dbReference type="CDD" id="cd10747">
    <property type="entry name" value="DnaJ_C"/>
    <property type="match status" value="1"/>
</dbReference>
<dbReference type="CDD" id="cd10719">
    <property type="entry name" value="DnaJ_zf"/>
    <property type="match status" value="1"/>
</dbReference>
<dbReference type="FunFam" id="1.10.287.110:FF:000003">
    <property type="entry name" value="Molecular chaperone DnaJ"/>
    <property type="match status" value="1"/>
</dbReference>
<dbReference type="FunFam" id="2.10.230.10:FF:000002">
    <property type="entry name" value="Molecular chaperone DnaJ"/>
    <property type="match status" value="1"/>
</dbReference>
<dbReference type="FunFam" id="2.60.260.20:FF:000004">
    <property type="entry name" value="Molecular chaperone DnaJ"/>
    <property type="match status" value="1"/>
</dbReference>
<dbReference type="Gene3D" id="1.10.287.110">
    <property type="entry name" value="DnaJ domain"/>
    <property type="match status" value="1"/>
</dbReference>
<dbReference type="Gene3D" id="2.10.230.10">
    <property type="entry name" value="Heat shock protein DnaJ, cysteine-rich domain"/>
    <property type="match status" value="1"/>
</dbReference>
<dbReference type="Gene3D" id="2.60.260.20">
    <property type="entry name" value="Urease metallochaperone UreE, N-terminal domain"/>
    <property type="match status" value="2"/>
</dbReference>
<dbReference type="HAMAP" id="MF_01152">
    <property type="entry name" value="DnaJ"/>
    <property type="match status" value="1"/>
</dbReference>
<dbReference type="InterPro" id="IPR012724">
    <property type="entry name" value="DnaJ"/>
</dbReference>
<dbReference type="InterPro" id="IPR002939">
    <property type="entry name" value="DnaJ_C"/>
</dbReference>
<dbReference type="InterPro" id="IPR001623">
    <property type="entry name" value="DnaJ_domain"/>
</dbReference>
<dbReference type="InterPro" id="IPR018253">
    <property type="entry name" value="DnaJ_domain_CS"/>
</dbReference>
<dbReference type="InterPro" id="IPR008971">
    <property type="entry name" value="HSP40/DnaJ_pept-bd"/>
</dbReference>
<dbReference type="InterPro" id="IPR001305">
    <property type="entry name" value="HSP_DnaJ_Cys-rich_dom"/>
</dbReference>
<dbReference type="InterPro" id="IPR036410">
    <property type="entry name" value="HSP_DnaJ_Cys-rich_dom_sf"/>
</dbReference>
<dbReference type="InterPro" id="IPR036869">
    <property type="entry name" value="J_dom_sf"/>
</dbReference>
<dbReference type="NCBIfam" id="TIGR02349">
    <property type="entry name" value="DnaJ_bact"/>
    <property type="match status" value="1"/>
</dbReference>
<dbReference type="NCBIfam" id="NF008035">
    <property type="entry name" value="PRK10767.1"/>
    <property type="match status" value="1"/>
</dbReference>
<dbReference type="PANTHER" id="PTHR43096:SF48">
    <property type="entry name" value="CHAPERONE PROTEIN DNAJ"/>
    <property type="match status" value="1"/>
</dbReference>
<dbReference type="PANTHER" id="PTHR43096">
    <property type="entry name" value="DNAJ HOMOLOG 1, MITOCHONDRIAL-RELATED"/>
    <property type="match status" value="1"/>
</dbReference>
<dbReference type="Pfam" id="PF00226">
    <property type="entry name" value="DnaJ"/>
    <property type="match status" value="1"/>
</dbReference>
<dbReference type="Pfam" id="PF01556">
    <property type="entry name" value="DnaJ_C"/>
    <property type="match status" value="1"/>
</dbReference>
<dbReference type="Pfam" id="PF00684">
    <property type="entry name" value="DnaJ_CXXCXGXG"/>
    <property type="match status" value="1"/>
</dbReference>
<dbReference type="PRINTS" id="PR00625">
    <property type="entry name" value="JDOMAIN"/>
</dbReference>
<dbReference type="SMART" id="SM00271">
    <property type="entry name" value="DnaJ"/>
    <property type="match status" value="1"/>
</dbReference>
<dbReference type="SUPFAM" id="SSF46565">
    <property type="entry name" value="Chaperone J-domain"/>
    <property type="match status" value="1"/>
</dbReference>
<dbReference type="SUPFAM" id="SSF57938">
    <property type="entry name" value="DnaJ/Hsp40 cysteine-rich domain"/>
    <property type="match status" value="1"/>
</dbReference>
<dbReference type="SUPFAM" id="SSF49493">
    <property type="entry name" value="HSP40/DnaJ peptide-binding domain"/>
    <property type="match status" value="2"/>
</dbReference>
<dbReference type="PROSITE" id="PS00636">
    <property type="entry name" value="DNAJ_1"/>
    <property type="match status" value="1"/>
</dbReference>
<dbReference type="PROSITE" id="PS50076">
    <property type="entry name" value="DNAJ_2"/>
    <property type="match status" value="1"/>
</dbReference>
<dbReference type="PROSITE" id="PS51188">
    <property type="entry name" value="ZF_CR"/>
    <property type="match status" value="1"/>
</dbReference>